<name>Y100_UREU1</name>
<organism>
    <name type="scientific">Ureaplasma urealyticum serovar 10 (strain ATCC 33699 / Western)</name>
    <dbReference type="NCBI Taxonomy" id="565575"/>
    <lineage>
        <taxon>Bacteria</taxon>
        <taxon>Bacillati</taxon>
        <taxon>Mycoplasmatota</taxon>
        <taxon>Mycoplasmoidales</taxon>
        <taxon>Mycoplasmoidaceae</taxon>
        <taxon>Ureaplasma</taxon>
    </lineage>
</organism>
<accession>B5ZAS3</accession>
<reference key="1">
    <citation type="submission" date="2008-10" db="EMBL/GenBank/DDBJ databases">
        <title>Genome sequence of Ureaplasma urealyticum serovar 10 ATCC-33699.</title>
        <authorList>
            <person name="Shrivastava S."/>
            <person name="Methe B.A."/>
            <person name="Glass J."/>
            <person name="White K."/>
            <person name="Duffy L.B."/>
        </authorList>
    </citation>
    <scope>NUCLEOTIDE SEQUENCE [LARGE SCALE GENOMIC DNA]</scope>
    <source>
        <strain>ATCC 33699 / Western</strain>
    </source>
</reference>
<proteinExistence type="inferred from homology"/>
<feature type="chain" id="PRO_1000114661" description="Nucleoid-associated protein UUR10_0100">
    <location>
        <begin position="1"/>
        <end position="99"/>
    </location>
</feature>
<evidence type="ECO:0000255" key="1">
    <source>
        <dbReference type="HAMAP-Rule" id="MF_00274"/>
    </source>
</evidence>
<keyword id="KW-0963">Cytoplasm</keyword>
<keyword id="KW-0238">DNA-binding</keyword>
<comment type="function">
    <text evidence="1">Binds to DNA and alters its conformation. May be involved in regulation of gene expression, nucleoid organization and DNA protection.</text>
</comment>
<comment type="subunit">
    <text evidence="1">Homodimer.</text>
</comment>
<comment type="subcellular location">
    <subcellularLocation>
        <location evidence="1">Cytoplasm</location>
        <location evidence="1">Nucleoid</location>
    </subcellularLocation>
</comment>
<comment type="similarity">
    <text evidence="1">Belongs to the YbaB/EbfC family.</text>
</comment>
<sequence length="99" mass="11422">MDFQKLAQELKKMQNTLSKKQKEFEEKVFDFDYKGYVLIKIKGNLTIESIEVKTEIVDPEDKETLQDILRAAVNEAISKTCKERDAIMNSTIPKGTGFF</sequence>
<protein>
    <recommendedName>
        <fullName evidence="1">Nucleoid-associated protein UUR10_0100</fullName>
    </recommendedName>
</protein>
<gene>
    <name type="ordered locus">UUR10_0100</name>
</gene>
<dbReference type="EMBL" id="CP001184">
    <property type="protein sequence ID" value="ACI60263.1"/>
    <property type="molecule type" value="Genomic_DNA"/>
</dbReference>
<dbReference type="RefSeq" id="WP_004026195.1">
    <property type="nucleotide sequence ID" value="NC_011374.1"/>
</dbReference>
<dbReference type="SMR" id="B5ZAS3"/>
<dbReference type="STRING" id="565575.UUR10_0100"/>
<dbReference type="KEGG" id="uue:UUR10_0100"/>
<dbReference type="eggNOG" id="COG0718">
    <property type="taxonomic scope" value="Bacteria"/>
</dbReference>
<dbReference type="HOGENOM" id="CLU_140930_1_2_14"/>
<dbReference type="OrthoDB" id="399030at2"/>
<dbReference type="Proteomes" id="UP000002018">
    <property type="component" value="Chromosome"/>
</dbReference>
<dbReference type="GO" id="GO:0043590">
    <property type="term" value="C:bacterial nucleoid"/>
    <property type="evidence" value="ECO:0007669"/>
    <property type="project" value="UniProtKB-UniRule"/>
</dbReference>
<dbReference type="GO" id="GO:0005737">
    <property type="term" value="C:cytoplasm"/>
    <property type="evidence" value="ECO:0007669"/>
    <property type="project" value="UniProtKB-UniRule"/>
</dbReference>
<dbReference type="GO" id="GO:0003677">
    <property type="term" value="F:DNA binding"/>
    <property type="evidence" value="ECO:0007669"/>
    <property type="project" value="UniProtKB-UniRule"/>
</dbReference>
<dbReference type="Gene3D" id="3.30.1310.10">
    <property type="entry name" value="Nucleoid-associated protein YbaB-like domain"/>
    <property type="match status" value="1"/>
</dbReference>
<dbReference type="HAMAP" id="MF_00274">
    <property type="entry name" value="DNA_YbaB_EbfC"/>
    <property type="match status" value="1"/>
</dbReference>
<dbReference type="InterPro" id="IPR036894">
    <property type="entry name" value="YbaB-like_sf"/>
</dbReference>
<dbReference type="InterPro" id="IPR004401">
    <property type="entry name" value="YbaB/EbfC"/>
</dbReference>
<dbReference type="NCBIfam" id="TIGR00103">
    <property type="entry name" value="DNA_YbaB_EbfC"/>
    <property type="match status" value="1"/>
</dbReference>
<dbReference type="Pfam" id="PF02575">
    <property type="entry name" value="YbaB_DNA_bd"/>
    <property type="match status" value="1"/>
</dbReference>
<dbReference type="PIRSF" id="PIRSF004555">
    <property type="entry name" value="UCP004555"/>
    <property type="match status" value="1"/>
</dbReference>
<dbReference type="SUPFAM" id="SSF82607">
    <property type="entry name" value="YbaB-like"/>
    <property type="match status" value="1"/>
</dbReference>